<accession>B1GZ97</accession>
<gene>
    <name evidence="1" type="primary">rpsH</name>
    <name type="ordered locus">TGRD_096</name>
</gene>
<comment type="function">
    <text evidence="1">One of the primary rRNA binding proteins, it binds directly to 16S rRNA central domain where it helps coordinate assembly of the platform of the 30S subunit.</text>
</comment>
<comment type="subunit">
    <text evidence="1">Part of the 30S ribosomal subunit. Contacts proteins S5 and S12.</text>
</comment>
<comment type="similarity">
    <text evidence="1">Belongs to the universal ribosomal protein uS8 family.</text>
</comment>
<keyword id="KW-0687">Ribonucleoprotein</keyword>
<keyword id="KW-0689">Ribosomal protein</keyword>
<keyword id="KW-0694">RNA-binding</keyword>
<keyword id="KW-0699">rRNA-binding</keyword>
<feature type="chain" id="PRO_1000140633" description="Small ribosomal subunit protein uS8">
    <location>
        <begin position="1"/>
        <end position="133"/>
    </location>
</feature>
<organism>
    <name type="scientific">Endomicrobium trichonymphae</name>
    <dbReference type="NCBI Taxonomy" id="1408204"/>
    <lineage>
        <taxon>Bacteria</taxon>
        <taxon>Pseudomonadati</taxon>
        <taxon>Elusimicrobiota</taxon>
        <taxon>Endomicrobiia</taxon>
        <taxon>Endomicrobiales</taxon>
        <taxon>Endomicrobiaceae</taxon>
        <taxon>Candidatus Endomicrobiellum</taxon>
    </lineage>
</organism>
<name>RS8_ENDTX</name>
<sequence length="133" mass="14748">MIIDPISDMFTRIRNANLKLHEKVDVPSSKLKLGIAKILKEEGYISNYEIKGIENQTQSVLRIHLRYTSKGKVVLQGIKRISKSSLRIYKGHSDVPRTIGGLGVTIISTSKGLMTDGQARKDKIGGEVIGCVW</sequence>
<proteinExistence type="inferred from homology"/>
<protein>
    <recommendedName>
        <fullName evidence="1">Small ribosomal subunit protein uS8</fullName>
    </recommendedName>
    <alternativeName>
        <fullName evidence="2">30S ribosomal protein S8</fullName>
    </alternativeName>
</protein>
<dbReference type="EMBL" id="AP009510">
    <property type="protein sequence ID" value="BAG13579.1"/>
    <property type="molecule type" value="Genomic_DNA"/>
</dbReference>
<dbReference type="RefSeq" id="WP_015423108.1">
    <property type="nucleotide sequence ID" value="NC_020419.1"/>
</dbReference>
<dbReference type="SMR" id="B1GZ97"/>
<dbReference type="STRING" id="471821.TGRD_096"/>
<dbReference type="KEGG" id="rsd:TGRD_096"/>
<dbReference type="PATRIC" id="fig|471821.5.peg.140"/>
<dbReference type="HOGENOM" id="CLU_098428_0_2_0"/>
<dbReference type="Proteomes" id="UP000001691">
    <property type="component" value="Chromosome"/>
</dbReference>
<dbReference type="GO" id="GO:1990904">
    <property type="term" value="C:ribonucleoprotein complex"/>
    <property type="evidence" value="ECO:0007669"/>
    <property type="project" value="UniProtKB-KW"/>
</dbReference>
<dbReference type="GO" id="GO:0005840">
    <property type="term" value="C:ribosome"/>
    <property type="evidence" value="ECO:0007669"/>
    <property type="project" value="UniProtKB-KW"/>
</dbReference>
<dbReference type="GO" id="GO:0019843">
    <property type="term" value="F:rRNA binding"/>
    <property type="evidence" value="ECO:0007669"/>
    <property type="project" value="UniProtKB-UniRule"/>
</dbReference>
<dbReference type="GO" id="GO:0003735">
    <property type="term" value="F:structural constituent of ribosome"/>
    <property type="evidence" value="ECO:0007669"/>
    <property type="project" value="InterPro"/>
</dbReference>
<dbReference type="GO" id="GO:0006412">
    <property type="term" value="P:translation"/>
    <property type="evidence" value="ECO:0007669"/>
    <property type="project" value="UniProtKB-UniRule"/>
</dbReference>
<dbReference type="FunFam" id="3.30.1370.30:FF:000002">
    <property type="entry name" value="30S ribosomal protein S8"/>
    <property type="match status" value="1"/>
</dbReference>
<dbReference type="FunFam" id="3.30.1490.10:FF:000001">
    <property type="entry name" value="30S ribosomal protein S8"/>
    <property type="match status" value="1"/>
</dbReference>
<dbReference type="Gene3D" id="3.30.1370.30">
    <property type="match status" value="1"/>
</dbReference>
<dbReference type="Gene3D" id="3.30.1490.10">
    <property type="match status" value="1"/>
</dbReference>
<dbReference type="HAMAP" id="MF_01302_B">
    <property type="entry name" value="Ribosomal_uS8_B"/>
    <property type="match status" value="1"/>
</dbReference>
<dbReference type="InterPro" id="IPR000630">
    <property type="entry name" value="Ribosomal_uS8"/>
</dbReference>
<dbReference type="InterPro" id="IPR047863">
    <property type="entry name" value="Ribosomal_uS8_CS"/>
</dbReference>
<dbReference type="InterPro" id="IPR035987">
    <property type="entry name" value="Ribosomal_uS8_sf"/>
</dbReference>
<dbReference type="NCBIfam" id="NF001109">
    <property type="entry name" value="PRK00136.1"/>
    <property type="match status" value="1"/>
</dbReference>
<dbReference type="PANTHER" id="PTHR11758">
    <property type="entry name" value="40S RIBOSOMAL PROTEIN S15A"/>
    <property type="match status" value="1"/>
</dbReference>
<dbReference type="Pfam" id="PF00410">
    <property type="entry name" value="Ribosomal_S8"/>
    <property type="match status" value="1"/>
</dbReference>
<dbReference type="SUPFAM" id="SSF56047">
    <property type="entry name" value="Ribosomal protein S8"/>
    <property type="match status" value="1"/>
</dbReference>
<dbReference type="PROSITE" id="PS00053">
    <property type="entry name" value="RIBOSOMAL_S8"/>
    <property type="match status" value="1"/>
</dbReference>
<reference key="1">
    <citation type="journal article" date="2008" name="Proc. Natl. Acad. Sci. U.S.A.">
        <title>Complete genome of the uncultured termite group 1 bacteria in a single host protist cell.</title>
        <authorList>
            <person name="Hongoh Y."/>
            <person name="Sharma V.K."/>
            <person name="Prakash T."/>
            <person name="Noda S."/>
            <person name="Taylor T.D."/>
            <person name="Kudo T."/>
            <person name="Sakaki Y."/>
            <person name="Toyoda A."/>
            <person name="Hattori M."/>
            <person name="Ohkuma M."/>
        </authorList>
    </citation>
    <scope>NUCLEOTIDE SEQUENCE [LARGE SCALE GENOMIC DNA]</scope>
</reference>
<evidence type="ECO:0000255" key="1">
    <source>
        <dbReference type="HAMAP-Rule" id="MF_01302"/>
    </source>
</evidence>
<evidence type="ECO:0000305" key="2"/>